<protein>
    <recommendedName>
        <fullName evidence="1">Kynurenine 3-monooxygenase</fullName>
        <ecNumber evidence="1">1.14.13.9</ecNumber>
    </recommendedName>
    <alternativeName>
        <fullName evidence="1">Kynurenine 3-hydroxylase</fullName>
    </alternativeName>
</protein>
<dbReference type="EC" id="1.14.13.9" evidence="1"/>
<dbReference type="EMBL" id="AAFI02000051">
    <property type="protein sequence ID" value="EAL65825.1"/>
    <property type="molecule type" value="Genomic_DNA"/>
</dbReference>
<dbReference type="RefSeq" id="XP_639197.1">
    <property type="nucleotide sequence ID" value="XM_634105.1"/>
</dbReference>
<dbReference type="SMR" id="Q54RE8"/>
<dbReference type="FunCoup" id="Q54RE8">
    <property type="interactions" value="93"/>
</dbReference>
<dbReference type="STRING" id="44689.Q54RE8"/>
<dbReference type="PaxDb" id="44689-DDB0231360"/>
<dbReference type="EnsemblProtists" id="EAL65825">
    <property type="protein sequence ID" value="EAL65825"/>
    <property type="gene ID" value="DDB_G0283173"/>
</dbReference>
<dbReference type="GeneID" id="8623972"/>
<dbReference type="KEGG" id="ddi:DDB_G0283173"/>
<dbReference type="dictyBase" id="DDB_G0283173">
    <property type="gene designation" value="kmo"/>
</dbReference>
<dbReference type="VEuPathDB" id="AmoebaDB:DDB_G0283173"/>
<dbReference type="eggNOG" id="KOG2614">
    <property type="taxonomic scope" value="Eukaryota"/>
</dbReference>
<dbReference type="HOGENOM" id="CLU_023210_0_1_1"/>
<dbReference type="InParanoid" id="Q54RE8"/>
<dbReference type="OMA" id="REFMFIA"/>
<dbReference type="PhylomeDB" id="Q54RE8"/>
<dbReference type="Reactome" id="R-DDI-71240">
    <property type="pathway name" value="Tryptophan catabolism"/>
</dbReference>
<dbReference type="UniPathway" id="UPA00253">
    <property type="reaction ID" value="UER00328"/>
</dbReference>
<dbReference type="PRO" id="PR:Q54RE8"/>
<dbReference type="Proteomes" id="UP000002195">
    <property type="component" value="Chromosome 4"/>
</dbReference>
<dbReference type="GO" id="GO:0005741">
    <property type="term" value="C:mitochondrial outer membrane"/>
    <property type="evidence" value="ECO:0000250"/>
    <property type="project" value="UniProtKB"/>
</dbReference>
<dbReference type="GO" id="GO:0071949">
    <property type="term" value="F:FAD binding"/>
    <property type="evidence" value="ECO:0007669"/>
    <property type="project" value="InterPro"/>
</dbReference>
<dbReference type="GO" id="GO:0004502">
    <property type="term" value="F:kynurenine 3-monooxygenase activity"/>
    <property type="evidence" value="ECO:0000250"/>
    <property type="project" value="UniProtKB"/>
</dbReference>
<dbReference type="GO" id="GO:0034354">
    <property type="term" value="P:'de novo' NAD biosynthetic process from L-tryptophan"/>
    <property type="evidence" value="ECO:0007669"/>
    <property type="project" value="UniProtKB-UniRule"/>
</dbReference>
<dbReference type="GO" id="GO:0043420">
    <property type="term" value="P:anthranilate metabolic process"/>
    <property type="evidence" value="ECO:0007669"/>
    <property type="project" value="UniProtKB-UniRule"/>
</dbReference>
<dbReference type="GO" id="GO:0070189">
    <property type="term" value="P:kynurenine metabolic process"/>
    <property type="evidence" value="ECO:0000318"/>
    <property type="project" value="GO_Central"/>
</dbReference>
<dbReference type="GO" id="GO:0006569">
    <property type="term" value="P:L-tryptophan catabolic process"/>
    <property type="evidence" value="ECO:0007669"/>
    <property type="project" value="UniProtKB-UniRule"/>
</dbReference>
<dbReference type="GO" id="GO:0019674">
    <property type="term" value="P:NAD metabolic process"/>
    <property type="evidence" value="ECO:0000250"/>
    <property type="project" value="UniProtKB"/>
</dbReference>
<dbReference type="GO" id="GO:0019805">
    <property type="term" value="P:quinolinate biosynthetic process"/>
    <property type="evidence" value="ECO:0007669"/>
    <property type="project" value="UniProtKB-UniRule"/>
</dbReference>
<dbReference type="FunFam" id="3.50.50.60:FF:000129">
    <property type="entry name" value="Kynurenine 3-monooxygenase"/>
    <property type="match status" value="1"/>
</dbReference>
<dbReference type="Gene3D" id="3.50.50.60">
    <property type="entry name" value="FAD/NAD(P)-binding domain"/>
    <property type="match status" value="1"/>
</dbReference>
<dbReference type="HAMAP" id="MF_01971">
    <property type="entry name" value="Kynurenine_monooxygenase"/>
    <property type="match status" value="1"/>
</dbReference>
<dbReference type="InterPro" id="IPR002938">
    <property type="entry name" value="FAD-bd"/>
</dbReference>
<dbReference type="InterPro" id="IPR036188">
    <property type="entry name" value="FAD/NAD-bd_sf"/>
</dbReference>
<dbReference type="InterPro" id="IPR027545">
    <property type="entry name" value="Kynurenine_monooxygenase"/>
</dbReference>
<dbReference type="PANTHER" id="PTHR46028">
    <property type="entry name" value="KYNURENINE 3-MONOOXYGENASE"/>
    <property type="match status" value="1"/>
</dbReference>
<dbReference type="PANTHER" id="PTHR46028:SF2">
    <property type="entry name" value="KYNURENINE 3-MONOOXYGENASE"/>
    <property type="match status" value="1"/>
</dbReference>
<dbReference type="Pfam" id="PF01494">
    <property type="entry name" value="FAD_binding_3"/>
    <property type="match status" value="2"/>
</dbReference>
<dbReference type="PRINTS" id="PR00420">
    <property type="entry name" value="RNGMNOXGNASE"/>
</dbReference>
<dbReference type="SUPFAM" id="SSF51905">
    <property type="entry name" value="FAD/NAD(P)-binding domain"/>
    <property type="match status" value="1"/>
</dbReference>
<evidence type="ECO:0000255" key="1">
    <source>
        <dbReference type="HAMAP-Rule" id="MF_03018"/>
    </source>
</evidence>
<reference key="1">
    <citation type="journal article" date="2005" name="Nature">
        <title>The genome of the social amoeba Dictyostelium discoideum.</title>
        <authorList>
            <person name="Eichinger L."/>
            <person name="Pachebat J.A."/>
            <person name="Gloeckner G."/>
            <person name="Rajandream M.A."/>
            <person name="Sucgang R."/>
            <person name="Berriman M."/>
            <person name="Song J."/>
            <person name="Olsen R."/>
            <person name="Szafranski K."/>
            <person name="Xu Q."/>
            <person name="Tunggal B."/>
            <person name="Kummerfeld S."/>
            <person name="Madera M."/>
            <person name="Konfortov B.A."/>
            <person name="Rivero F."/>
            <person name="Bankier A.T."/>
            <person name="Lehmann R."/>
            <person name="Hamlin N."/>
            <person name="Davies R."/>
            <person name="Gaudet P."/>
            <person name="Fey P."/>
            <person name="Pilcher K."/>
            <person name="Chen G."/>
            <person name="Saunders D."/>
            <person name="Sodergren E.J."/>
            <person name="Davis P."/>
            <person name="Kerhornou A."/>
            <person name="Nie X."/>
            <person name="Hall N."/>
            <person name="Anjard C."/>
            <person name="Hemphill L."/>
            <person name="Bason N."/>
            <person name="Farbrother P."/>
            <person name="Desany B."/>
            <person name="Just E."/>
            <person name="Morio T."/>
            <person name="Rost R."/>
            <person name="Churcher C.M."/>
            <person name="Cooper J."/>
            <person name="Haydock S."/>
            <person name="van Driessche N."/>
            <person name="Cronin A."/>
            <person name="Goodhead I."/>
            <person name="Muzny D.M."/>
            <person name="Mourier T."/>
            <person name="Pain A."/>
            <person name="Lu M."/>
            <person name="Harper D."/>
            <person name="Lindsay R."/>
            <person name="Hauser H."/>
            <person name="James K.D."/>
            <person name="Quiles M."/>
            <person name="Madan Babu M."/>
            <person name="Saito T."/>
            <person name="Buchrieser C."/>
            <person name="Wardroper A."/>
            <person name="Felder M."/>
            <person name="Thangavelu M."/>
            <person name="Johnson D."/>
            <person name="Knights A."/>
            <person name="Loulseged H."/>
            <person name="Mungall K.L."/>
            <person name="Oliver K."/>
            <person name="Price C."/>
            <person name="Quail M.A."/>
            <person name="Urushihara H."/>
            <person name="Hernandez J."/>
            <person name="Rabbinowitsch E."/>
            <person name="Steffen D."/>
            <person name="Sanders M."/>
            <person name="Ma J."/>
            <person name="Kohara Y."/>
            <person name="Sharp S."/>
            <person name="Simmonds M.N."/>
            <person name="Spiegler S."/>
            <person name="Tivey A."/>
            <person name="Sugano S."/>
            <person name="White B."/>
            <person name="Walker D."/>
            <person name="Woodward J.R."/>
            <person name="Winckler T."/>
            <person name="Tanaka Y."/>
            <person name="Shaulsky G."/>
            <person name="Schleicher M."/>
            <person name="Weinstock G.M."/>
            <person name="Rosenthal A."/>
            <person name="Cox E.C."/>
            <person name="Chisholm R.L."/>
            <person name="Gibbs R.A."/>
            <person name="Loomis W.F."/>
            <person name="Platzer M."/>
            <person name="Kay R.R."/>
            <person name="Williams J.G."/>
            <person name="Dear P.H."/>
            <person name="Noegel A.A."/>
            <person name="Barrell B.G."/>
            <person name="Kuspa A."/>
        </authorList>
    </citation>
    <scope>NUCLEOTIDE SEQUENCE [LARGE SCALE GENOMIC DNA]</scope>
    <source>
        <strain>AX4</strain>
    </source>
</reference>
<sequence length="460" mass="52261">MDILLNKPITIVGGGLAGSALALLLGQKGFPIQVIEKRPKQSENIRARSINLALSDRGVKTLTKTGYVDDILKIAIPMKGRMIHSLDSVQTFQAYSSDSNKHLYSVSRQLLNDRLREHTEKLENVKFIFSDACKSIDLKQCTIQTQDSNQTIEASTIIGCDGAFSAVRGSMVKLDRQDYSQSYLKHGYKELCIPSGPNQTFQIDKNSLHIWPRGSFMMIALPNIDGSFTCTLFFPFDGPLSFSSLDTREKVDQFFKDYFPDAYKLMPDLLDDYFENPTSSLVTVKTEPYHYQGKVVLVGDAAHAIVPFYGQGMNAAFEDVLELFNCFEDKSLYPSSTDKPFDNDHFNNIYKKYQENRKANSDAIAEMAVENFFEMRDHVGDALFLFKKKVEHLLEVKFPSRYISRYELISFSTQPYAYAQKIGLANQQILNELVKGNDDYNIEKIDLVLADQLIKKYLNK</sequence>
<keyword id="KW-0274">FAD</keyword>
<keyword id="KW-0285">Flavoprotein</keyword>
<keyword id="KW-0496">Mitochondrion</keyword>
<keyword id="KW-0503">Monooxygenase</keyword>
<keyword id="KW-0521">NADP</keyword>
<keyword id="KW-0560">Oxidoreductase</keyword>
<keyword id="KW-0662">Pyridine nucleotide biosynthesis</keyword>
<keyword id="KW-1185">Reference proteome</keyword>
<organism>
    <name type="scientific">Dictyostelium discoideum</name>
    <name type="common">Social amoeba</name>
    <dbReference type="NCBI Taxonomy" id="44689"/>
    <lineage>
        <taxon>Eukaryota</taxon>
        <taxon>Amoebozoa</taxon>
        <taxon>Evosea</taxon>
        <taxon>Eumycetozoa</taxon>
        <taxon>Dictyostelia</taxon>
        <taxon>Dictyosteliales</taxon>
        <taxon>Dictyosteliaceae</taxon>
        <taxon>Dictyostelium</taxon>
    </lineage>
</organism>
<accession>Q54RE8</accession>
<gene>
    <name evidence="1" type="primary">kmo</name>
    <name type="ORF">DDB_G0283173</name>
</gene>
<proteinExistence type="inferred from homology"/>
<comment type="function">
    <text evidence="1">Catalyzes the hydroxylation of L-kynurenine (L-Kyn) to form 3-hydroxy-L-kynurenine (L-3OHKyn). Required for synthesis of quinolinic acid.</text>
</comment>
<comment type="catalytic activity">
    <reaction evidence="1">
        <text>L-kynurenine + NADPH + O2 + H(+) = 3-hydroxy-L-kynurenine + NADP(+) + H2O</text>
        <dbReference type="Rhea" id="RHEA:20545"/>
        <dbReference type="ChEBI" id="CHEBI:15377"/>
        <dbReference type="ChEBI" id="CHEBI:15378"/>
        <dbReference type="ChEBI" id="CHEBI:15379"/>
        <dbReference type="ChEBI" id="CHEBI:57783"/>
        <dbReference type="ChEBI" id="CHEBI:57959"/>
        <dbReference type="ChEBI" id="CHEBI:58125"/>
        <dbReference type="ChEBI" id="CHEBI:58349"/>
        <dbReference type="EC" id="1.14.13.9"/>
    </reaction>
</comment>
<comment type="cofactor">
    <cofactor evidence="1">
        <name>FAD</name>
        <dbReference type="ChEBI" id="CHEBI:57692"/>
    </cofactor>
</comment>
<comment type="pathway">
    <text evidence="1">Cofactor biosynthesis; NAD(+) biosynthesis; quinolinate from L-kynurenine: step 1/3.</text>
</comment>
<comment type="subcellular location">
    <subcellularLocation>
        <location evidence="1">Mitochondrion</location>
    </subcellularLocation>
</comment>
<comment type="similarity">
    <text evidence="1">Belongs to the aromatic-ring hydroxylase family. KMO subfamily.</text>
</comment>
<name>KMO_DICDI</name>
<feature type="chain" id="PRO_0000331234" description="Kynurenine 3-monooxygenase">
    <location>
        <begin position="1"/>
        <end position="460"/>
    </location>
</feature>